<comment type="function">
    <text evidence="1">NAD-binding protein involved in the addition of a carboxymethylaminomethyl (cmnm) group at the wobble position (U34) of certain tRNAs, forming tRNA-cmnm(5)s(2)U34.</text>
</comment>
<comment type="cofactor">
    <cofactor evidence="1">
        <name>FAD</name>
        <dbReference type="ChEBI" id="CHEBI:57692"/>
    </cofactor>
</comment>
<comment type="subunit">
    <text evidence="1">Homodimer. Heterotetramer of two MnmE and two MnmG subunits.</text>
</comment>
<comment type="subcellular location">
    <subcellularLocation>
        <location evidence="1">Cytoplasm</location>
    </subcellularLocation>
</comment>
<comment type="similarity">
    <text evidence="1">Belongs to the MnmG family.</text>
</comment>
<evidence type="ECO:0000255" key="1">
    <source>
        <dbReference type="HAMAP-Rule" id="MF_00129"/>
    </source>
</evidence>
<name>MNMG_ENT38</name>
<accession>A4WGE6</accession>
<reference key="1">
    <citation type="journal article" date="2010" name="PLoS Genet.">
        <title>Genome sequence of the plant growth promoting endophytic bacterium Enterobacter sp. 638.</title>
        <authorList>
            <person name="Taghavi S."/>
            <person name="van der Lelie D."/>
            <person name="Hoffman A."/>
            <person name="Zhang Y.B."/>
            <person name="Walla M.D."/>
            <person name="Vangronsveld J."/>
            <person name="Newman L."/>
            <person name="Monchy S."/>
        </authorList>
    </citation>
    <scope>NUCLEOTIDE SEQUENCE [LARGE SCALE GENOMIC DNA]</scope>
    <source>
        <strain>638</strain>
    </source>
</reference>
<sequence>MFYQDPFDVIIIGGGHAGTEAAMAAARMGQQTLLLTHNIDTLGQMSCNPAIGGIGKGHLVKEVDALGGLMAKAIDHAGIQFRILNASKGPAVRATRAQADRVLYRQAVRTALENQPNLMIFQQAVEDLIVENDRVVGAVTQMGLKFRAKAVVLTVGTFLDGKIHIGLDNYSGGRAGDPPSISLSRRLRELPLRVNRLKTGTPPRIDARTIDFSVLAQQHGDTPIPVFSFMGNAAQHPQQVPCYITHTNEKTHDVIRNNLDRSPMYAGVIEGIGPRYCPSIEDKVMRFADRNQHQIFLEPEGLTSNEIYPNGISTSLPFDVQIQIVRSMQGMENAKIVRPGYAIEYDFFDPRDLKPTLESKFIQGLFFAGQINGTTGYEEAAAQGLLAGLNAARFSAEKEGWAPRRDQAYLGVLVDDLSTMGTKEPYRMFTSRAEYRLMLREDNADLRLTEMGRELGLVDDERWARFNEKLERIETERQRLKSTWVNPLADSVAEVNAHLAAPLSREASGEDLLRRPGMTYEQLVQMTPFAPGLDDAEAAEQVEIQIKYEGYIARQQDEIEKQQRNENTLLPEMLDYRQVTGLSNEVIAKLNDHKPVSIGQASRISGVTPAAISILLVWLKKQGMLRRSA</sequence>
<organism>
    <name type="scientific">Enterobacter sp. (strain 638)</name>
    <dbReference type="NCBI Taxonomy" id="399742"/>
    <lineage>
        <taxon>Bacteria</taxon>
        <taxon>Pseudomonadati</taxon>
        <taxon>Pseudomonadota</taxon>
        <taxon>Gammaproteobacteria</taxon>
        <taxon>Enterobacterales</taxon>
        <taxon>Enterobacteriaceae</taxon>
        <taxon>Enterobacter</taxon>
    </lineage>
</organism>
<feature type="chain" id="PRO_1000057843" description="tRNA uridine 5-carboxymethylaminomethyl modification enzyme MnmG">
    <location>
        <begin position="1"/>
        <end position="629"/>
    </location>
</feature>
<feature type="binding site" evidence="1">
    <location>
        <begin position="13"/>
        <end position="18"/>
    </location>
    <ligand>
        <name>FAD</name>
        <dbReference type="ChEBI" id="CHEBI:57692"/>
    </ligand>
</feature>
<feature type="binding site" evidence="1">
    <location>
        <position position="125"/>
    </location>
    <ligand>
        <name>FAD</name>
        <dbReference type="ChEBI" id="CHEBI:57692"/>
    </ligand>
</feature>
<feature type="binding site" evidence="1">
    <location>
        <position position="180"/>
    </location>
    <ligand>
        <name>FAD</name>
        <dbReference type="ChEBI" id="CHEBI:57692"/>
    </ligand>
</feature>
<feature type="binding site" evidence="1">
    <location>
        <begin position="273"/>
        <end position="287"/>
    </location>
    <ligand>
        <name>NAD(+)</name>
        <dbReference type="ChEBI" id="CHEBI:57540"/>
    </ligand>
</feature>
<feature type="binding site" evidence="1">
    <location>
        <position position="370"/>
    </location>
    <ligand>
        <name>FAD</name>
        <dbReference type="ChEBI" id="CHEBI:57692"/>
    </ligand>
</feature>
<keyword id="KW-0963">Cytoplasm</keyword>
<keyword id="KW-0274">FAD</keyword>
<keyword id="KW-0285">Flavoprotein</keyword>
<keyword id="KW-0520">NAD</keyword>
<keyword id="KW-0819">tRNA processing</keyword>
<proteinExistence type="inferred from homology"/>
<protein>
    <recommendedName>
        <fullName evidence="1">tRNA uridine 5-carboxymethylaminomethyl modification enzyme MnmG</fullName>
    </recommendedName>
    <alternativeName>
        <fullName evidence="1">Glucose-inhibited division protein A</fullName>
    </alternativeName>
</protein>
<dbReference type="EMBL" id="CP000653">
    <property type="protein sequence ID" value="ABP62776.1"/>
    <property type="molecule type" value="Genomic_DNA"/>
</dbReference>
<dbReference type="RefSeq" id="WP_015961080.1">
    <property type="nucleotide sequence ID" value="NC_009436.1"/>
</dbReference>
<dbReference type="SMR" id="A4WGE6"/>
<dbReference type="STRING" id="399742.Ent638_4123"/>
<dbReference type="KEGG" id="ent:Ent638_4123"/>
<dbReference type="eggNOG" id="COG0445">
    <property type="taxonomic scope" value="Bacteria"/>
</dbReference>
<dbReference type="HOGENOM" id="CLU_007831_2_2_6"/>
<dbReference type="OrthoDB" id="9815560at2"/>
<dbReference type="Proteomes" id="UP000000230">
    <property type="component" value="Chromosome"/>
</dbReference>
<dbReference type="GO" id="GO:0005829">
    <property type="term" value="C:cytosol"/>
    <property type="evidence" value="ECO:0007669"/>
    <property type="project" value="TreeGrafter"/>
</dbReference>
<dbReference type="GO" id="GO:0050660">
    <property type="term" value="F:flavin adenine dinucleotide binding"/>
    <property type="evidence" value="ECO:0007669"/>
    <property type="project" value="UniProtKB-UniRule"/>
</dbReference>
<dbReference type="GO" id="GO:0030488">
    <property type="term" value="P:tRNA methylation"/>
    <property type="evidence" value="ECO:0007669"/>
    <property type="project" value="TreeGrafter"/>
</dbReference>
<dbReference type="GO" id="GO:0002098">
    <property type="term" value="P:tRNA wobble uridine modification"/>
    <property type="evidence" value="ECO:0007669"/>
    <property type="project" value="InterPro"/>
</dbReference>
<dbReference type="FunFam" id="1.10.10.1800:FF:000001">
    <property type="entry name" value="tRNA uridine 5-carboxymethylaminomethyl modification enzyme MnmG"/>
    <property type="match status" value="1"/>
</dbReference>
<dbReference type="FunFam" id="1.10.150.570:FF:000001">
    <property type="entry name" value="tRNA uridine 5-carboxymethylaminomethyl modification enzyme MnmG"/>
    <property type="match status" value="1"/>
</dbReference>
<dbReference type="FunFam" id="3.50.50.60:FF:000002">
    <property type="entry name" value="tRNA uridine 5-carboxymethylaminomethyl modification enzyme MnmG"/>
    <property type="match status" value="1"/>
</dbReference>
<dbReference type="FunFam" id="3.50.50.60:FF:000010">
    <property type="entry name" value="tRNA uridine 5-carboxymethylaminomethyl modification enzyme MnmG"/>
    <property type="match status" value="1"/>
</dbReference>
<dbReference type="Gene3D" id="3.50.50.60">
    <property type="entry name" value="FAD/NAD(P)-binding domain"/>
    <property type="match status" value="2"/>
</dbReference>
<dbReference type="Gene3D" id="1.10.150.570">
    <property type="entry name" value="GidA associated domain, C-terminal subdomain"/>
    <property type="match status" value="1"/>
</dbReference>
<dbReference type="Gene3D" id="1.10.10.1800">
    <property type="entry name" value="tRNA uridine 5-carboxymethylaminomethyl modification enzyme MnmG/GidA"/>
    <property type="match status" value="1"/>
</dbReference>
<dbReference type="HAMAP" id="MF_00129">
    <property type="entry name" value="MnmG_GidA"/>
    <property type="match status" value="1"/>
</dbReference>
<dbReference type="InterPro" id="IPR036188">
    <property type="entry name" value="FAD/NAD-bd_sf"/>
</dbReference>
<dbReference type="InterPro" id="IPR049312">
    <property type="entry name" value="GIDA_C_N"/>
</dbReference>
<dbReference type="InterPro" id="IPR004416">
    <property type="entry name" value="MnmG"/>
</dbReference>
<dbReference type="InterPro" id="IPR002218">
    <property type="entry name" value="MnmG-rel"/>
</dbReference>
<dbReference type="InterPro" id="IPR020595">
    <property type="entry name" value="MnmG-rel_CS"/>
</dbReference>
<dbReference type="InterPro" id="IPR026904">
    <property type="entry name" value="MnmG_C"/>
</dbReference>
<dbReference type="InterPro" id="IPR047001">
    <property type="entry name" value="MnmG_C_subdom"/>
</dbReference>
<dbReference type="InterPro" id="IPR044920">
    <property type="entry name" value="MnmG_C_subdom_sf"/>
</dbReference>
<dbReference type="InterPro" id="IPR040131">
    <property type="entry name" value="MnmG_N"/>
</dbReference>
<dbReference type="NCBIfam" id="TIGR00136">
    <property type="entry name" value="mnmG_gidA"/>
    <property type="match status" value="1"/>
</dbReference>
<dbReference type="PANTHER" id="PTHR11806">
    <property type="entry name" value="GLUCOSE INHIBITED DIVISION PROTEIN A"/>
    <property type="match status" value="1"/>
</dbReference>
<dbReference type="PANTHER" id="PTHR11806:SF0">
    <property type="entry name" value="PROTEIN MTO1 HOMOLOG, MITOCHONDRIAL"/>
    <property type="match status" value="1"/>
</dbReference>
<dbReference type="Pfam" id="PF01134">
    <property type="entry name" value="GIDA"/>
    <property type="match status" value="1"/>
</dbReference>
<dbReference type="Pfam" id="PF21680">
    <property type="entry name" value="GIDA_C_1st"/>
    <property type="match status" value="1"/>
</dbReference>
<dbReference type="Pfam" id="PF13932">
    <property type="entry name" value="SAM_GIDA_C"/>
    <property type="match status" value="1"/>
</dbReference>
<dbReference type="SMART" id="SM01228">
    <property type="entry name" value="GIDA_assoc_3"/>
    <property type="match status" value="1"/>
</dbReference>
<dbReference type="SUPFAM" id="SSF51905">
    <property type="entry name" value="FAD/NAD(P)-binding domain"/>
    <property type="match status" value="1"/>
</dbReference>
<dbReference type="PROSITE" id="PS01280">
    <property type="entry name" value="GIDA_1"/>
    <property type="match status" value="1"/>
</dbReference>
<dbReference type="PROSITE" id="PS01281">
    <property type="entry name" value="GIDA_2"/>
    <property type="match status" value="1"/>
</dbReference>
<gene>
    <name evidence="1" type="primary">mnmG</name>
    <name evidence="1" type="synonym">gidA</name>
    <name type="ordered locus">Ent638_4123</name>
</gene>